<name>GGGPS_METBF</name>
<organism>
    <name type="scientific">Methanosarcina barkeri (strain Fusaro / DSM 804)</name>
    <dbReference type="NCBI Taxonomy" id="269797"/>
    <lineage>
        <taxon>Archaea</taxon>
        <taxon>Methanobacteriati</taxon>
        <taxon>Methanobacteriota</taxon>
        <taxon>Stenosarchaea group</taxon>
        <taxon>Methanomicrobia</taxon>
        <taxon>Methanosarcinales</taxon>
        <taxon>Methanosarcinaceae</taxon>
        <taxon>Methanosarcina</taxon>
    </lineage>
</organism>
<accession>Q46EN8</accession>
<keyword id="KW-0963">Cytoplasm</keyword>
<keyword id="KW-0444">Lipid biosynthesis</keyword>
<keyword id="KW-0443">Lipid metabolism</keyword>
<keyword id="KW-0460">Magnesium</keyword>
<keyword id="KW-0479">Metal-binding</keyword>
<keyword id="KW-0594">Phospholipid biosynthesis</keyword>
<keyword id="KW-1208">Phospholipid metabolism</keyword>
<keyword id="KW-0808">Transferase</keyword>
<proteinExistence type="inferred from homology"/>
<gene>
    <name type="ordered locus">Mbar_A0675</name>
</gene>
<evidence type="ECO:0000255" key="1">
    <source>
        <dbReference type="HAMAP-Rule" id="MF_00112"/>
    </source>
</evidence>
<sequence length="247" mass="25935">MQVEAHLQKIIDQEGKVHLTLIDPASQTPERAAEIALAAVKGGTDAIMIGGSTGASGTLLDETVIKIKEKVDVPTILFPGSSAGLSRYADAVFFMSLLNSRDLGYVITNQVMGAPLVYQSQIEPISMAYLIVEPGGTVGWVGDAKLIPRKKPELAAVYALAGKYLGMHYTYLEAGSGADKPINPEMIGAVKKVLGENKLIVGGGIRDAEAAKLCASAGADMIVTGTVLEEVRDVTAKVAELVSAIKR</sequence>
<comment type="function">
    <text evidence="1">Prenyltransferase that catalyzes the transfer of the geranylgeranyl moiety of geranylgeranyl diphosphate (GGPP) to the C3 hydroxyl of sn-glycerol-1-phosphate (G1P). This reaction is the first ether-bond-formation step in the biosynthesis of archaeal membrane lipids.</text>
</comment>
<comment type="catalytic activity">
    <reaction evidence="1">
        <text>sn-glycerol 1-phosphate + (2E,6E,10E)-geranylgeranyl diphosphate = sn-3-O-(geranylgeranyl)glycerol 1-phosphate + diphosphate</text>
        <dbReference type="Rhea" id="RHEA:23404"/>
        <dbReference type="ChEBI" id="CHEBI:33019"/>
        <dbReference type="ChEBI" id="CHEBI:57677"/>
        <dbReference type="ChEBI" id="CHEBI:57685"/>
        <dbReference type="ChEBI" id="CHEBI:58756"/>
        <dbReference type="EC" id="2.5.1.41"/>
    </reaction>
</comment>
<comment type="cofactor">
    <cofactor evidence="1">
        <name>Mg(2+)</name>
        <dbReference type="ChEBI" id="CHEBI:18420"/>
    </cofactor>
</comment>
<comment type="pathway">
    <text evidence="1">Membrane lipid metabolism; glycerophospholipid metabolism.</text>
</comment>
<comment type="subcellular location">
    <subcellularLocation>
        <location evidence="1">Cytoplasm</location>
    </subcellularLocation>
</comment>
<comment type="similarity">
    <text evidence="1">Belongs to the GGGP/HepGP synthase family. Group II subfamily.</text>
</comment>
<reference key="1">
    <citation type="journal article" date="2006" name="J. Bacteriol.">
        <title>The Methanosarcina barkeri genome: comparative analysis with Methanosarcina acetivorans and Methanosarcina mazei reveals extensive rearrangement within methanosarcinal genomes.</title>
        <authorList>
            <person name="Maeder D.L."/>
            <person name="Anderson I."/>
            <person name="Brettin T.S."/>
            <person name="Bruce D.C."/>
            <person name="Gilna P."/>
            <person name="Han C.S."/>
            <person name="Lapidus A."/>
            <person name="Metcalf W.W."/>
            <person name="Saunders E."/>
            <person name="Tapia R."/>
            <person name="Sowers K.R."/>
        </authorList>
    </citation>
    <scope>NUCLEOTIDE SEQUENCE [LARGE SCALE GENOMIC DNA]</scope>
    <source>
        <strain>Fusaro / DSM 804</strain>
    </source>
</reference>
<dbReference type="EC" id="2.5.1.41" evidence="1"/>
<dbReference type="EMBL" id="CP000099">
    <property type="protein sequence ID" value="AAZ69654.1"/>
    <property type="molecule type" value="Genomic_DNA"/>
</dbReference>
<dbReference type="SMR" id="Q46EN8"/>
<dbReference type="STRING" id="269797.Mbar_A0675"/>
<dbReference type="PaxDb" id="269797-Mbar_A0675"/>
<dbReference type="KEGG" id="mba:Mbar_A0675"/>
<dbReference type="eggNOG" id="arCOG01085">
    <property type="taxonomic scope" value="Archaea"/>
</dbReference>
<dbReference type="HOGENOM" id="CLU_068610_0_0_2"/>
<dbReference type="OrthoDB" id="7409at2157"/>
<dbReference type="UniPathway" id="UPA00940"/>
<dbReference type="GO" id="GO:0005737">
    <property type="term" value="C:cytoplasm"/>
    <property type="evidence" value="ECO:0007669"/>
    <property type="project" value="UniProtKB-SubCell"/>
</dbReference>
<dbReference type="GO" id="GO:0000107">
    <property type="term" value="F:imidazoleglycerol-phosphate synthase activity"/>
    <property type="evidence" value="ECO:0007669"/>
    <property type="project" value="TreeGrafter"/>
</dbReference>
<dbReference type="GO" id="GO:0000287">
    <property type="term" value="F:magnesium ion binding"/>
    <property type="evidence" value="ECO:0007669"/>
    <property type="project" value="UniProtKB-UniRule"/>
</dbReference>
<dbReference type="GO" id="GO:0047294">
    <property type="term" value="F:phosphoglycerol geranylgeranyltransferase activity"/>
    <property type="evidence" value="ECO:0007669"/>
    <property type="project" value="UniProtKB-UniRule"/>
</dbReference>
<dbReference type="GO" id="GO:0046474">
    <property type="term" value="P:glycerophospholipid biosynthetic process"/>
    <property type="evidence" value="ECO:0007669"/>
    <property type="project" value="UniProtKB-UniRule"/>
</dbReference>
<dbReference type="CDD" id="cd02812">
    <property type="entry name" value="PcrB_like"/>
    <property type="match status" value="1"/>
</dbReference>
<dbReference type="FunFam" id="3.20.20.390:FF:000001">
    <property type="entry name" value="Heptaprenylglyceryl phosphate synthase"/>
    <property type="match status" value="1"/>
</dbReference>
<dbReference type="Gene3D" id="3.20.20.390">
    <property type="entry name" value="FMN-linked oxidoreductases"/>
    <property type="match status" value="1"/>
</dbReference>
<dbReference type="HAMAP" id="MF_00112">
    <property type="entry name" value="GGGP_HepGP_synthase"/>
    <property type="match status" value="1"/>
</dbReference>
<dbReference type="InterPro" id="IPR038597">
    <property type="entry name" value="GGGP/HepGP_synthase_sf"/>
</dbReference>
<dbReference type="InterPro" id="IPR008205">
    <property type="entry name" value="GGGP_HepGP_synthase"/>
</dbReference>
<dbReference type="InterPro" id="IPR010946">
    <property type="entry name" value="GGGP_synth"/>
</dbReference>
<dbReference type="InterPro" id="IPR050064">
    <property type="entry name" value="IGPS_HisA/HisF"/>
</dbReference>
<dbReference type="NCBIfam" id="TIGR01769">
    <property type="entry name" value="GGGP"/>
    <property type="match status" value="1"/>
</dbReference>
<dbReference type="NCBIfam" id="TIGR01768">
    <property type="entry name" value="GGGP-family"/>
    <property type="match status" value="1"/>
</dbReference>
<dbReference type="NCBIfam" id="NF003198">
    <property type="entry name" value="PRK04169.1-2"/>
    <property type="match status" value="1"/>
</dbReference>
<dbReference type="PANTHER" id="PTHR21235:SF22">
    <property type="entry name" value="GERANYLGERANYLGLYCERYL PHOSPHATE SYNTHASE"/>
    <property type="match status" value="1"/>
</dbReference>
<dbReference type="PANTHER" id="PTHR21235">
    <property type="entry name" value="IMIDAZOLE GLYCEROL PHOSPHATE SYNTHASE SUBUNIT HISF/H IGP SYNTHASE SUBUNIT HISF/H"/>
    <property type="match status" value="1"/>
</dbReference>
<dbReference type="Pfam" id="PF01884">
    <property type="entry name" value="PcrB"/>
    <property type="match status" value="1"/>
</dbReference>
<dbReference type="SUPFAM" id="SSF51395">
    <property type="entry name" value="FMN-linked oxidoreductases"/>
    <property type="match status" value="1"/>
</dbReference>
<protein>
    <recommendedName>
        <fullName evidence="1">Geranylgeranylglyceryl phosphate synthase</fullName>
        <shortName evidence="1">GGGP synthase</shortName>
        <shortName evidence="1">GGGPS</shortName>
        <ecNumber evidence="1">2.5.1.41</ecNumber>
    </recommendedName>
    <alternativeName>
        <fullName evidence="1">(S)-3-O-geranylgeranylglyceryl phosphate synthase</fullName>
    </alternativeName>
    <alternativeName>
        <fullName evidence="1">Phosphoglycerol geranylgeranyltransferase</fullName>
    </alternativeName>
</protein>
<feature type="chain" id="PRO_0000231308" description="Geranylgeranylglyceryl phosphate synthase">
    <location>
        <begin position="1"/>
        <end position="247"/>
    </location>
</feature>
<feature type="binding site" evidence="1">
    <location>
        <position position="23"/>
    </location>
    <ligand>
        <name>Mg(2+)</name>
        <dbReference type="ChEBI" id="CHEBI:18420"/>
    </ligand>
</feature>
<feature type="binding site" evidence="1">
    <location>
        <position position="52"/>
    </location>
    <ligand>
        <name>Mg(2+)</name>
        <dbReference type="ChEBI" id="CHEBI:18420"/>
    </ligand>
</feature>
<feature type="binding site" evidence="1">
    <location>
        <begin position="171"/>
        <end position="177"/>
    </location>
    <ligand>
        <name>sn-glycerol 1-phosphate</name>
        <dbReference type="ChEBI" id="CHEBI:57685"/>
    </ligand>
</feature>
<feature type="binding site" evidence="1">
    <location>
        <begin position="203"/>
        <end position="204"/>
    </location>
    <ligand>
        <name>sn-glycerol 1-phosphate</name>
        <dbReference type="ChEBI" id="CHEBI:57685"/>
    </ligand>
</feature>
<feature type="binding site" evidence="1">
    <location>
        <begin position="225"/>
        <end position="226"/>
    </location>
    <ligand>
        <name>sn-glycerol 1-phosphate</name>
        <dbReference type="ChEBI" id="CHEBI:57685"/>
    </ligand>
</feature>